<comment type="function">
    <text evidence="4 5">Small GTPase required for ciliation. Activated in a guanine nucleotide exchange factor (GEF)-independent manner via its intrinsic GDP for GTP nucleotide exchange ability (PubMed:28625565). Involved in ciliary assembly by binding the intraflagellar transport (IFT) complex B from the large pool pre-docked at the base of the cilium and thus triggers its entry into the cilia (PubMed:28428259, PubMed:28625565).</text>
</comment>
<comment type="subunit">
    <text evidence="4 5">Interacts (in its GTP-bound form) with CEP19 (via residues 121-150); this interaction is required for its localization to the mother centriole and cilium basal body. Interacts (in its GTP-bound form) with the intraflagellar transport (IFT) complex B (via the IFT74-IFT81 heterodimer) (PubMed:28428259, PubMed:28625565). Binding to CEP19 and the IFT74-IFT81 heterodimer is mutually exclusive (PubMed:28428259).</text>
</comment>
<comment type="interaction">
    <interactant intactId="EBI-12256104">
        <id>Q9UNT1-2</id>
    </interactant>
    <interactant intactId="EBI-741885">
        <id>Q96LK0</id>
        <label>CEP19</label>
    </interactant>
    <organismsDiffer>false</organismsDiffer>
    <experiments>3</experiments>
</comment>
<comment type="interaction">
    <interactant intactId="EBI-12256104">
        <id>Q9UNT1-2</id>
    </interactant>
    <interactant intactId="EBI-348399">
        <id>P22607</id>
        <label>FGFR3</label>
    </interactant>
    <organismsDiffer>false</organismsDiffer>
    <experiments>3</experiments>
</comment>
<comment type="interaction">
    <interactant intactId="EBI-12256104">
        <id>Q9UNT1-2</id>
    </interactant>
    <interactant intactId="EBI-351506">
        <id>P06396</id>
        <label>GSN</label>
    </interactant>
    <organismsDiffer>false</organismsDiffer>
    <experiments>3</experiments>
</comment>
<comment type="interaction">
    <interactant intactId="EBI-12256104">
        <id>Q9UNT1-2</id>
    </interactant>
    <interactant intactId="EBI-741480">
        <id>Q9UMX0</id>
        <label>UBQLN1</label>
    </interactant>
    <organismsDiffer>false</organismsDiffer>
    <experiments>3</experiments>
</comment>
<comment type="subcellular location">
    <subcellularLocation>
        <location evidence="4 5">Cytoplasm</location>
        <location evidence="4 5">Cytoskeleton</location>
        <location evidence="4 5">Microtubule organizing center</location>
        <location evidence="4 5">Centrosome</location>
        <location evidence="4 5">Centriole</location>
    </subcellularLocation>
    <subcellularLocation>
        <location evidence="4">Cytoplasm</location>
        <location evidence="4">Cytoskeleton</location>
        <location evidence="4">Cilium basal body</location>
    </subcellularLocation>
    <subcellularLocation>
        <location evidence="5">Cytoplasm</location>
    </subcellularLocation>
    <text evidence="5">Localizes on the mother centriole. Localizes slightly apical to the subdistal appendage, but below the distal appendage.</text>
</comment>
<comment type="alternative products">
    <event type="alternative splicing"/>
    <isoform>
        <id>Q9UNT1-1</id>
        <name>1</name>
        <sequence type="displayed"/>
    </isoform>
    <isoform>
        <id>Q9UNT1-2</id>
        <name>2</name>
        <sequence type="described" ref="VSP_005532"/>
    </isoform>
    <isoform>
        <id>Q9UNT1-3</id>
        <name>3</name>
        <sequence type="described" ref="VSP_041061"/>
    </isoform>
</comment>
<comment type="tissue specificity">
    <text evidence="3">Expressed in the testis.</text>
</comment>
<comment type="similarity">
    <text evidence="8">Belongs to the small GTPase superfamily. Rab family.</text>
</comment>
<organism>
    <name type="scientific">Homo sapiens</name>
    <name type="common">Human</name>
    <dbReference type="NCBI Taxonomy" id="9606"/>
    <lineage>
        <taxon>Eukaryota</taxon>
        <taxon>Metazoa</taxon>
        <taxon>Chordata</taxon>
        <taxon>Craniata</taxon>
        <taxon>Vertebrata</taxon>
        <taxon>Euteleostomi</taxon>
        <taxon>Mammalia</taxon>
        <taxon>Eutheria</taxon>
        <taxon>Euarchontoglires</taxon>
        <taxon>Primates</taxon>
        <taxon>Haplorrhini</taxon>
        <taxon>Catarrhini</taxon>
        <taxon>Hominidae</taxon>
        <taxon>Homo</taxon>
    </lineage>
</organism>
<name>RBL2B_HUMAN</name>
<feature type="chain" id="PRO_0000121264" description="Rab-like protein 2B">
    <location>
        <begin position="1"/>
        <end position="228"/>
    </location>
</feature>
<feature type="region of interest" description="Disordered" evidence="2">
    <location>
        <begin position="200"/>
        <end position="228"/>
    </location>
</feature>
<feature type="binding site" evidence="1">
    <location>
        <begin position="28"/>
        <end position="35"/>
    </location>
    <ligand>
        <name>GTP</name>
        <dbReference type="ChEBI" id="CHEBI:37565"/>
    </ligand>
</feature>
<feature type="binding site" evidence="1">
    <location>
        <begin position="76"/>
        <end position="80"/>
    </location>
    <ligand>
        <name>GTP</name>
        <dbReference type="ChEBI" id="CHEBI:37565"/>
    </ligand>
</feature>
<feature type="binding site" evidence="1">
    <location>
        <begin position="133"/>
        <end position="136"/>
    </location>
    <ligand>
        <name>GTP</name>
        <dbReference type="ChEBI" id="CHEBI:37565"/>
    </ligand>
</feature>
<feature type="splice variant" id="VSP_005532" description="In isoform 2." evidence="6 7">
    <original>D</original>
    <variation>DA</variation>
    <location>
        <position position="136"/>
    </location>
</feature>
<feature type="splice variant" id="VSP_041061" description="In isoform 3." evidence="7">
    <original>K</original>
    <variation>KVWLTAEVASK</variation>
    <location>
        <position position="168"/>
    </location>
</feature>
<feature type="mutagenesis site" description="GDP-locked form; mild defects in ciliary assembly. Loss of interaction with the intraflagellar transport (IFT) complex B via the IFT74-IFT81 heterodimer. Loss of interaction with CEP19. Loss of localization to the centrosome. Loss of localization to the base of the cilium." evidence="4 5">
    <original>S</original>
    <variation>N</variation>
    <location>
        <position position="35"/>
    </location>
</feature>
<feature type="mutagenesis site" description="Mild defects in ciliary assembly. Loss of interaction with the intraflagellar transport (IFT) complex B via the IFT74-IFT81 heterodimer. Interacts with CEP19." evidence="4">
    <original>D</original>
    <variation>G</variation>
    <location>
        <position position="73"/>
    </location>
</feature>
<feature type="mutagenesis site" description="GTP-locked form; interacts with the intraflagellar transport (IFT) complex B via the IFT74-IFT81 heterodimer. Localizes to the base of the cilium and accumulates within the cilium and at the tip in specific puncta." evidence="4 5">
    <original>Q</original>
    <variation>L</variation>
    <location>
        <position position="80"/>
    </location>
</feature>
<keyword id="KW-0025">Alternative splicing</keyword>
<keyword id="KW-0966">Cell projection</keyword>
<keyword id="KW-0969">Cilium</keyword>
<keyword id="KW-0970">Cilium biogenesis/degradation</keyword>
<keyword id="KW-0963">Cytoplasm</keyword>
<keyword id="KW-0206">Cytoskeleton</keyword>
<keyword id="KW-0342">GTP-binding</keyword>
<keyword id="KW-0547">Nucleotide-binding</keyword>
<keyword id="KW-1267">Proteomics identification</keyword>
<keyword id="KW-1185">Reference proteome</keyword>
<evidence type="ECO:0000250" key="1"/>
<evidence type="ECO:0000256" key="2">
    <source>
        <dbReference type="SAM" id="MobiDB-lite"/>
    </source>
</evidence>
<evidence type="ECO:0000269" key="3">
    <source>
    </source>
</evidence>
<evidence type="ECO:0000269" key="4">
    <source>
    </source>
</evidence>
<evidence type="ECO:0000269" key="5">
    <source>
    </source>
</evidence>
<evidence type="ECO:0000303" key="6">
    <source>
    </source>
</evidence>
<evidence type="ECO:0000303" key="7">
    <source ref="2"/>
</evidence>
<evidence type="ECO:0000305" key="8"/>
<protein>
    <recommendedName>
        <fullName>Rab-like protein 2B</fullName>
    </recommendedName>
</protein>
<dbReference type="EMBL" id="AF095352">
    <property type="protein sequence ID" value="AAD51379.1"/>
    <property type="molecule type" value="mRNA"/>
</dbReference>
<dbReference type="EMBL" id="BT020037">
    <property type="protein sequence ID" value="AAV38840.1"/>
    <property type="molecule type" value="mRNA"/>
</dbReference>
<dbReference type="EMBL" id="AC002055">
    <property type="status" value="NOT_ANNOTATED_CDS"/>
    <property type="molecule type" value="Genomic_DNA"/>
</dbReference>
<dbReference type="EMBL" id="BC014879">
    <property type="protein sequence ID" value="AAH14879.1"/>
    <property type="molecule type" value="mRNA"/>
</dbReference>
<dbReference type="EMBL" id="BC024281">
    <property type="protein sequence ID" value="AAH24281.1"/>
    <property type="molecule type" value="mRNA"/>
</dbReference>
<dbReference type="EMBL" id="BC075856">
    <property type="status" value="NOT_ANNOTATED_CDS"/>
    <property type="molecule type" value="mRNA"/>
</dbReference>
<dbReference type="CCDS" id="CCDS14102.1">
    <molecule id="Q9UNT1-1"/>
</dbReference>
<dbReference type="CCDS" id="CCDS33683.1">
    <molecule id="Q9UNT1-2"/>
</dbReference>
<dbReference type="CCDS" id="CCDS46738.1">
    <molecule id="Q9UNT1-3"/>
</dbReference>
<dbReference type="RefSeq" id="NP_001003789.1">
    <molecule id="Q9UNT1-2"/>
    <property type="nucleotide sequence ID" value="NM_001003789.3"/>
</dbReference>
<dbReference type="RefSeq" id="NP_001124391.1">
    <molecule id="Q9UNT1-2"/>
    <property type="nucleotide sequence ID" value="NM_001130919.3"/>
</dbReference>
<dbReference type="RefSeq" id="NP_001124392.1">
    <molecule id="Q9UNT1-2"/>
    <property type="nucleotide sequence ID" value="NM_001130920.3"/>
</dbReference>
<dbReference type="RefSeq" id="NP_001124393.1">
    <molecule id="Q9UNT1-2"/>
    <property type="nucleotide sequence ID" value="NM_001130921.3"/>
</dbReference>
<dbReference type="RefSeq" id="NP_001124394.1">
    <molecule id="Q9UNT1-1"/>
    <property type="nucleotide sequence ID" value="NM_001130922.3"/>
</dbReference>
<dbReference type="RefSeq" id="NP_001124395.1">
    <molecule id="Q9UNT1-3"/>
    <property type="nucleotide sequence ID" value="NM_001130923.3"/>
</dbReference>
<dbReference type="RefSeq" id="NP_001336932.1">
    <molecule id="Q9UNT1-2"/>
    <property type="nucleotide sequence ID" value="NM_001350003.2"/>
</dbReference>
<dbReference type="RefSeq" id="NP_001336933.1">
    <molecule id="Q9UNT1-2"/>
    <property type="nucleotide sequence ID" value="NM_001350004.2"/>
</dbReference>
<dbReference type="RefSeq" id="NP_001336934.1">
    <molecule id="Q9UNT1-1"/>
    <property type="nucleotide sequence ID" value="NM_001350005.2"/>
</dbReference>
<dbReference type="RefSeq" id="NP_001336935.1">
    <molecule id="Q9UNT1-1"/>
    <property type="nucleotide sequence ID" value="NM_001350006.2"/>
</dbReference>
<dbReference type="RefSeq" id="NP_001336936.1">
    <molecule id="Q9UNT1-1"/>
    <property type="nucleotide sequence ID" value="NM_001350007.2"/>
</dbReference>
<dbReference type="RefSeq" id="NP_001336942.1">
    <molecule id="Q9UNT1-3"/>
    <property type="nucleotide sequence ID" value="NM_001350013.2"/>
</dbReference>
<dbReference type="RefSeq" id="NP_001336943.1">
    <molecule id="Q9UNT1-3"/>
    <property type="nucleotide sequence ID" value="NM_001350014.2"/>
</dbReference>
<dbReference type="RefSeq" id="NP_001336944.1">
    <molecule id="Q9UNT1-3"/>
    <property type="nucleotide sequence ID" value="NM_001350015.2"/>
</dbReference>
<dbReference type="RefSeq" id="NP_001380983.1">
    <molecule id="Q9UNT1-2"/>
    <property type="nucleotide sequence ID" value="NM_001394054.1"/>
</dbReference>
<dbReference type="RefSeq" id="NP_001380984.1">
    <molecule id="Q9UNT1-2"/>
    <property type="nucleotide sequence ID" value="NM_001394055.1"/>
</dbReference>
<dbReference type="RefSeq" id="NP_009012.1">
    <molecule id="Q9UNT1-1"/>
    <property type="nucleotide sequence ID" value="NM_007081.4"/>
</dbReference>
<dbReference type="RefSeq" id="XP_005261956.1">
    <property type="nucleotide sequence ID" value="XM_005261899.2"/>
</dbReference>
<dbReference type="RefSeq" id="XP_011528977.1">
    <property type="nucleotide sequence ID" value="XM_011530675.1"/>
</dbReference>
<dbReference type="RefSeq" id="XP_016884036.1">
    <molecule id="Q9UNT1-3"/>
    <property type="nucleotide sequence ID" value="XM_017028547.2"/>
</dbReference>
<dbReference type="RefSeq" id="XP_016884037.1">
    <property type="nucleotide sequence ID" value="XM_017028548.1"/>
</dbReference>
<dbReference type="RefSeq" id="XP_016884038.1">
    <property type="nucleotide sequence ID" value="XM_017028549.1"/>
</dbReference>
<dbReference type="RefSeq" id="XP_016884041.1">
    <molecule id="Q9UNT1-2"/>
    <property type="nucleotide sequence ID" value="XM_017028552.2"/>
</dbReference>
<dbReference type="RefSeq" id="XP_016884042.1">
    <property type="nucleotide sequence ID" value="XM_017028553.1"/>
</dbReference>
<dbReference type="RefSeq" id="XP_016884043.1">
    <property type="nucleotide sequence ID" value="XM_017028554.1"/>
</dbReference>
<dbReference type="RefSeq" id="XP_016884044.1">
    <property type="nucleotide sequence ID" value="XM_017028555.1"/>
</dbReference>
<dbReference type="RefSeq" id="XP_016884045.1">
    <molecule id="Q9UNT1-1"/>
    <property type="nucleotide sequence ID" value="XM_017028556.2"/>
</dbReference>
<dbReference type="RefSeq" id="XP_016884046.1">
    <property type="nucleotide sequence ID" value="XM_017028557.1"/>
</dbReference>
<dbReference type="RefSeq" id="XP_016884047.1">
    <property type="nucleotide sequence ID" value="XM_017028558.1"/>
</dbReference>
<dbReference type="RefSeq" id="XP_047297044.1">
    <molecule id="Q9UNT1-3"/>
    <property type="nucleotide sequence ID" value="XM_047441088.1"/>
</dbReference>
<dbReference type="RefSeq" id="XP_047297045.1">
    <molecule id="Q9UNT1-3"/>
    <property type="nucleotide sequence ID" value="XM_047441089.1"/>
</dbReference>
<dbReference type="RefSeq" id="XP_047297051.1">
    <molecule id="Q9UNT1-2"/>
    <property type="nucleotide sequence ID" value="XM_047441095.1"/>
</dbReference>
<dbReference type="RefSeq" id="XP_047297052.1">
    <molecule id="Q9UNT1-2"/>
    <property type="nucleotide sequence ID" value="XM_047441096.1"/>
</dbReference>
<dbReference type="RefSeq" id="XP_047297053.1">
    <molecule id="Q9UNT1-2"/>
    <property type="nucleotide sequence ID" value="XM_047441097.1"/>
</dbReference>
<dbReference type="RefSeq" id="XP_047297054.1">
    <molecule id="Q9UNT1-1"/>
    <property type="nucleotide sequence ID" value="XM_047441098.1"/>
</dbReference>
<dbReference type="RefSeq" id="XP_047297055.1">
    <molecule id="Q9UNT1-1"/>
    <property type="nucleotide sequence ID" value="XM_047441099.1"/>
</dbReference>
<dbReference type="RefSeq" id="XP_047297056.1">
    <molecule id="Q9UNT1-1"/>
    <property type="nucleotide sequence ID" value="XM_047441100.1"/>
</dbReference>
<dbReference type="RefSeq" id="XP_047297057.1">
    <molecule id="Q9UNT1-1"/>
    <property type="nucleotide sequence ID" value="XM_047441101.1"/>
</dbReference>
<dbReference type="RefSeq" id="XP_054180993.1">
    <molecule id="Q9UNT1-3"/>
    <property type="nucleotide sequence ID" value="XM_054325018.1"/>
</dbReference>
<dbReference type="RefSeq" id="XP_054180994.1">
    <molecule id="Q9UNT1-3"/>
    <property type="nucleotide sequence ID" value="XM_054325019.1"/>
</dbReference>
<dbReference type="RefSeq" id="XP_054180995.1">
    <molecule id="Q9UNT1-3"/>
    <property type="nucleotide sequence ID" value="XM_054325020.1"/>
</dbReference>
<dbReference type="RefSeq" id="XP_054181001.1">
    <molecule id="Q9UNT1-2"/>
    <property type="nucleotide sequence ID" value="XM_054325026.1"/>
</dbReference>
<dbReference type="RefSeq" id="XP_054181002.1">
    <molecule id="Q9UNT1-2"/>
    <property type="nucleotide sequence ID" value="XM_054325027.1"/>
</dbReference>
<dbReference type="RefSeq" id="XP_054181003.1">
    <molecule id="Q9UNT1-2"/>
    <property type="nucleotide sequence ID" value="XM_054325028.1"/>
</dbReference>
<dbReference type="RefSeq" id="XP_054181004.1">
    <molecule id="Q9UNT1-2"/>
    <property type="nucleotide sequence ID" value="XM_054325029.1"/>
</dbReference>
<dbReference type="RefSeq" id="XP_054181005.1">
    <molecule id="Q9UNT1-1"/>
    <property type="nucleotide sequence ID" value="XM_054325030.1"/>
</dbReference>
<dbReference type="RefSeq" id="XP_054181006.1">
    <molecule id="Q9UNT1-1"/>
    <property type="nucleotide sequence ID" value="XM_054325031.1"/>
</dbReference>
<dbReference type="RefSeq" id="XP_054181007.1">
    <molecule id="Q9UNT1-1"/>
    <property type="nucleotide sequence ID" value="XM_054325032.1"/>
</dbReference>
<dbReference type="RefSeq" id="XP_054181008.1">
    <molecule id="Q9UNT1-1"/>
    <property type="nucleotide sequence ID" value="XM_054325033.1"/>
</dbReference>
<dbReference type="RefSeq" id="XP_054181009.1">
    <molecule id="Q9UNT1-1"/>
    <property type="nucleotide sequence ID" value="XM_054325034.1"/>
</dbReference>
<dbReference type="SMR" id="Q9UNT1"/>
<dbReference type="BioGRID" id="116329">
    <property type="interactions" value="11"/>
</dbReference>
<dbReference type="CORUM" id="Q9UNT1"/>
<dbReference type="FunCoup" id="Q9UNT1">
    <property type="interactions" value="1199"/>
</dbReference>
<dbReference type="IntAct" id="Q9UNT1">
    <property type="interactions" value="12"/>
</dbReference>
<dbReference type="STRING" id="9606.ENSP00000378958"/>
<dbReference type="iPTMnet" id="Q9UNT1"/>
<dbReference type="PhosphoSitePlus" id="Q9UNT1"/>
<dbReference type="BioMuta" id="RABL2B"/>
<dbReference type="DMDM" id="12229940"/>
<dbReference type="jPOST" id="Q9UNT1"/>
<dbReference type="MassIVE" id="Q9UNT1"/>
<dbReference type="PeptideAtlas" id="Q9UNT1"/>
<dbReference type="ProteomicsDB" id="85329">
    <molecule id="Q9UNT1-1"/>
</dbReference>
<dbReference type="ProteomicsDB" id="85330">
    <molecule id="Q9UNT1-2"/>
</dbReference>
<dbReference type="ProteomicsDB" id="85331">
    <molecule id="Q9UNT1-3"/>
</dbReference>
<dbReference type="Pumba" id="Q9UNT1"/>
<dbReference type="Antibodypedia" id="28876">
    <property type="antibodies" value="50 antibodies from 21 providers"/>
</dbReference>
<dbReference type="DNASU" id="11158"/>
<dbReference type="Ensembl" id="ENST00000354869.8">
    <molecule id="Q9UNT1-2"/>
    <property type="protein sequence ID" value="ENSP00000346940.3"/>
    <property type="gene ID" value="ENSG00000079974.19"/>
</dbReference>
<dbReference type="Ensembl" id="ENST00000395593.7">
    <molecule id="Q9UNT1-3"/>
    <property type="protein sequence ID" value="ENSP00000378958.3"/>
    <property type="gene ID" value="ENSG00000079974.19"/>
</dbReference>
<dbReference type="Ensembl" id="ENST00000395595.8">
    <molecule id="Q9UNT1-2"/>
    <property type="protein sequence ID" value="ENSP00000378960.3"/>
    <property type="gene ID" value="ENSG00000079974.19"/>
</dbReference>
<dbReference type="Ensembl" id="ENST00000395598.7">
    <molecule id="Q9UNT1-1"/>
    <property type="protein sequence ID" value="ENSP00000378962.3"/>
    <property type="gene ID" value="ENSG00000079974.19"/>
</dbReference>
<dbReference type="Ensembl" id="ENST00000435118.5">
    <molecule id="Q9UNT1-1"/>
    <property type="protein sequence ID" value="ENSP00000401906.1"/>
    <property type="gene ID" value="ENSG00000079974.19"/>
</dbReference>
<dbReference type="Ensembl" id="ENST00000691320.1">
    <molecule id="Q9UNT1-2"/>
    <property type="protein sequence ID" value="ENSP00000509250.1"/>
    <property type="gene ID" value="ENSG00000079974.19"/>
</dbReference>
<dbReference type="GeneID" id="11158"/>
<dbReference type="KEGG" id="hsa:11158"/>
<dbReference type="MANE-Select" id="ENST00000691320.1">
    <molecule id="Q9UNT1-2"/>
    <property type="protein sequence ID" value="ENSP00000509250.1"/>
    <property type="RefSeq nucleotide sequence ID" value="NM_001130919.3"/>
    <property type="RefSeq protein sequence ID" value="NP_001124391.1"/>
</dbReference>
<dbReference type="UCSC" id="uc003bnk.2">
    <molecule id="Q9UNT1-1"/>
    <property type="organism name" value="human"/>
</dbReference>
<dbReference type="AGR" id="HGNC:9800"/>
<dbReference type="CTD" id="11158"/>
<dbReference type="DisGeNET" id="11158"/>
<dbReference type="GeneCards" id="RABL2B"/>
<dbReference type="HGNC" id="HGNC:9800">
    <property type="gene designation" value="RABL2B"/>
</dbReference>
<dbReference type="HPA" id="ENSG00000079974">
    <property type="expression patterns" value="Tissue enhanced (epididymis)"/>
</dbReference>
<dbReference type="MIM" id="605413">
    <property type="type" value="gene"/>
</dbReference>
<dbReference type="neXtProt" id="NX_Q9UNT1"/>
<dbReference type="OpenTargets" id="ENSG00000079974"/>
<dbReference type="PharmGKB" id="PA34160"/>
<dbReference type="VEuPathDB" id="HostDB:ENSG00000079974"/>
<dbReference type="GeneTree" id="ENSGT00940000156551"/>
<dbReference type="HOGENOM" id="CLU_041217_13_1_1"/>
<dbReference type="InParanoid" id="Q9UNT1"/>
<dbReference type="OMA" id="CSADICY"/>
<dbReference type="OrthoDB" id="9516654at2759"/>
<dbReference type="PAN-GO" id="Q9UNT1">
    <property type="GO annotations" value="3 GO annotations based on evolutionary models"/>
</dbReference>
<dbReference type="PhylomeDB" id="Q9UNT1"/>
<dbReference type="TreeFam" id="TF329398"/>
<dbReference type="PathwayCommons" id="Q9UNT1"/>
<dbReference type="SignaLink" id="Q9UNT1"/>
<dbReference type="BioGRID-ORCS" id="11158">
    <property type="hits" value="22 hits in 1045 CRISPR screens"/>
</dbReference>
<dbReference type="GenomeRNAi" id="11158"/>
<dbReference type="Pharos" id="Q9UNT1">
    <property type="development level" value="Tdark"/>
</dbReference>
<dbReference type="PRO" id="PR:Q9UNT1"/>
<dbReference type="Proteomes" id="UP000005640">
    <property type="component" value="Chromosome 22"/>
</dbReference>
<dbReference type="RNAct" id="Q9UNT1">
    <property type="molecule type" value="protein"/>
</dbReference>
<dbReference type="Bgee" id="ENSG00000079974">
    <property type="expression patterns" value="Expressed in right uterine tube and 96 other cell types or tissues"/>
</dbReference>
<dbReference type="ExpressionAtlas" id="Q9UNT1">
    <property type="expression patterns" value="baseline and differential"/>
</dbReference>
<dbReference type="GO" id="GO:0005814">
    <property type="term" value="C:centriole"/>
    <property type="evidence" value="ECO:0000314"/>
    <property type="project" value="UniProtKB"/>
</dbReference>
<dbReference type="GO" id="GO:0036064">
    <property type="term" value="C:ciliary basal body"/>
    <property type="evidence" value="ECO:0000314"/>
    <property type="project" value="UniProtKB"/>
</dbReference>
<dbReference type="GO" id="GO:0005737">
    <property type="term" value="C:cytoplasm"/>
    <property type="evidence" value="ECO:0000314"/>
    <property type="project" value="UniProtKB"/>
</dbReference>
<dbReference type="GO" id="GO:0012505">
    <property type="term" value="C:endomembrane system"/>
    <property type="evidence" value="ECO:0000318"/>
    <property type="project" value="GO_Central"/>
</dbReference>
<dbReference type="GO" id="GO:0000242">
    <property type="term" value="C:pericentriolar material"/>
    <property type="evidence" value="ECO:0000314"/>
    <property type="project" value="UniProtKB"/>
</dbReference>
<dbReference type="GO" id="GO:0005525">
    <property type="term" value="F:GTP binding"/>
    <property type="evidence" value="ECO:0007669"/>
    <property type="project" value="UniProtKB-KW"/>
</dbReference>
<dbReference type="GO" id="GO:0003924">
    <property type="term" value="F:GTPase activity"/>
    <property type="evidence" value="ECO:0000318"/>
    <property type="project" value="GO_Central"/>
</dbReference>
<dbReference type="GO" id="GO:0060271">
    <property type="term" value="P:cilium assembly"/>
    <property type="evidence" value="ECO:0000315"/>
    <property type="project" value="UniProtKB"/>
</dbReference>
<dbReference type="GO" id="GO:0006886">
    <property type="term" value="P:intracellular protein transport"/>
    <property type="evidence" value="ECO:0000318"/>
    <property type="project" value="GO_Central"/>
</dbReference>
<dbReference type="GO" id="GO:0042073">
    <property type="term" value="P:intraciliary transport"/>
    <property type="evidence" value="ECO:0000315"/>
    <property type="project" value="UniProtKB"/>
</dbReference>
<dbReference type="CDD" id="cd04124">
    <property type="entry name" value="RabL2"/>
    <property type="match status" value="1"/>
</dbReference>
<dbReference type="FunFam" id="3.40.50.300:FF:000986">
    <property type="entry name" value="rab-like protein 2B isoform X4"/>
    <property type="match status" value="1"/>
</dbReference>
<dbReference type="Gene3D" id="3.40.50.300">
    <property type="entry name" value="P-loop containing nucleotide triphosphate hydrolases"/>
    <property type="match status" value="1"/>
</dbReference>
<dbReference type="InterPro" id="IPR027417">
    <property type="entry name" value="P-loop_NTPase"/>
</dbReference>
<dbReference type="InterPro" id="IPR041835">
    <property type="entry name" value="RabL2"/>
</dbReference>
<dbReference type="InterPro" id="IPR005225">
    <property type="entry name" value="Small_GTP-bd"/>
</dbReference>
<dbReference type="InterPro" id="IPR001806">
    <property type="entry name" value="Small_GTPase"/>
</dbReference>
<dbReference type="NCBIfam" id="TIGR00231">
    <property type="entry name" value="small_GTP"/>
    <property type="match status" value="1"/>
</dbReference>
<dbReference type="PANTHER" id="PTHR47978">
    <property type="match status" value="1"/>
</dbReference>
<dbReference type="Pfam" id="PF00071">
    <property type="entry name" value="Ras"/>
    <property type="match status" value="1"/>
</dbReference>
<dbReference type="PRINTS" id="PR00449">
    <property type="entry name" value="RASTRNSFRMNG"/>
</dbReference>
<dbReference type="SMART" id="SM00175">
    <property type="entry name" value="RAB"/>
    <property type="match status" value="1"/>
</dbReference>
<dbReference type="SMART" id="SM00176">
    <property type="entry name" value="RAN"/>
    <property type="match status" value="1"/>
</dbReference>
<dbReference type="SMART" id="SM00173">
    <property type="entry name" value="RAS"/>
    <property type="match status" value="1"/>
</dbReference>
<dbReference type="SMART" id="SM00174">
    <property type="entry name" value="RHO"/>
    <property type="match status" value="1"/>
</dbReference>
<dbReference type="SUPFAM" id="SSF52540">
    <property type="entry name" value="P-loop containing nucleoside triphosphate hydrolases"/>
    <property type="match status" value="1"/>
</dbReference>
<dbReference type="PROSITE" id="PS51419">
    <property type="entry name" value="RAB"/>
    <property type="match status" value="1"/>
</dbReference>
<sequence>MAEDKTKPSELDQGKYDADDNVKIICLGDSAVGKSKLMERFLMDGFQPQQLSTYALTLYKHTATVDGRTILVDFWDTAGQERFQSMHASYYHKAHACIMVFDVQRKVTYRNLSTWYTELREFRPEIPCIVVANKIDDINVTQKSFNFAKKFSLPLYFVSAADGTNVVKLFNDAIRLAVSYKQNSQDFMDEIFQELENFSLEQEEEDVPDQEQSSSIETPSEEAASPHS</sequence>
<reference key="1">
    <citation type="journal article" date="1999" name="Genomics">
        <title>Two novel human RAB genes with near identical sequence each map to a telomere-associated region: the subtelomeric region of 22q13.3 and the ancestral telomere band 2q13.</title>
        <authorList>
            <person name="Wong A.C."/>
            <person name="Shkolny D."/>
            <person name="Dorman A."/>
            <person name="Willingham D."/>
            <person name="Roe B.A."/>
            <person name="McDermid H.E."/>
        </authorList>
    </citation>
    <scope>NUCLEOTIDE SEQUENCE [MRNA] (ISOFORM 1)</scope>
</reference>
<reference key="2">
    <citation type="submission" date="2004-10" db="EMBL/GenBank/DDBJ databases">
        <title>Cloning of human full-length CDSs in BD Creator(TM) system donor vector.</title>
        <authorList>
            <person name="Kalnine N."/>
            <person name="Chen X."/>
            <person name="Rolfs A."/>
            <person name="Halleck A."/>
            <person name="Hines L."/>
            <person name="Eisenstein S."/>
            <person name="Koundinya M."/>
            <person name="Raphael J."/>
            <person name="Moreira D."/>
            <person name="Kelley T."/>
            <person name="LaBaer J."/>
            <person name="Lin Y."/>
            <person name="Phelan M."/>
            <person name="Farmer A."/>
        </authorList>
    </citation>
    <scope>NUCLEOTIDE SEQUENCE [LARGE SCALE MRNA] (ISOFORMS 2 AND 3)</scope>
</reference>
<reference key="3">
    <citation type="journal article" date="1999" name="Nature">
        <title>The DNA sequence of human chromosome 22.</title>
        <authorList>
            <person name="Dunham I."/>
            <person name="Hunt A.R."/>
            <person name="Collins J.E."/>
            <person name="Bruskiewich R."/>
            <person name="Beare D.M."/>
            <person name="Clamp M."/>
            <person name="Smink L.J."/>
            <person name="Ainscough R."/>
            <person name="Almeida J.P."/>
            <person name="Babbage A.K."/>
            <person name="Bagguley C."/>
            <person name="Bailey J."/>
            <person name="Barlow K.F."/>
            <person name="Bates K.N."/>
            <person name="Beasley O.P."/>
            <person name="Bird C.P."/>
            <person name="Blakey S.E."/>
            <person name="Bridgeman A.M."/>
            <person name="Buck D."/>
            <person name="Burgess J."/>
            <person name="Burrill W.D."/>
            <person name="Burton J."/>
            <person name="Carder C."/>
            <person name="Carter N.P."/>
            <person name="Chen Y."/>
            <person name="Clark G."/>
            <person name="Clegg S.M."/>
            <person name="Cobley V.E."/>
            <person name="Cole C.G."/>
            <person name="Collier R.E."/>
            <person name="Connor R."/>
            <person name="Conroy D."/>
            <person name="Corby N.R."/>
            <person name="Coville G.J."/>
            <person name="Cox A.V."/>
            <person name="Davis J."/>
            <person name="Dawson E."/>
            <person name="Dhami P.D."/>
            <person name="Dockree C."/>
            <person name="Dodsworth S.J."/>
            <person name="Durbin R.M."/>
            <person name="Ellington A.G."/>
            <person name="Evans K.L."/>
            <person name="Fey J.M."/>
            <person name="Fleming K."/>
            <person name="French L."/>
            <person name="Garner A.A."/>
            <person name="Gilbert J.G.R."/>
            <person name="Goward M.E."/>
            <person name="Grafham D.V."/>
            <person name="Griffiths M.N.D."/>
            <person name="Hall C."/>
            <person name="Hall R.E."/>
            <person name="Hall-Tamlyn G."/>
            <person name="Heathcott R.W."/>
            <person name="Ho S."/>
            <person name="Holmes S."/>
            <person name="Hunt S.E."/>
            <person name="Jones M.C."/>
            <person name="Kershaw J."/>
            <person name="Kimberley A.M."/>
            <person name="King A."/>
            <person name="Laird G.K."/>
            <person name="Langford C.F."/>
            <person name="Leversha M.A."/>
            <person name="Lloyd C."/>
            <person name="Lloyd D.M."/>
            <person name="Martyn I.D."/>
            <person name="Mashreghi-Mohammadi M."/>
            <person name="Matthews L.H."/>
            <person name="Mccann O.T."/>
            <person name="Mcclay J."/>
            <person name="Mclaren S."/>
            <person name="McMurray A.A."/>
            <person name="Milne S.A."/>
            <person name="Mortimore B.J."/>
            <person name="Odell C.N."/>
            <person name="Pavitt R."/>
            <person name="Pearce A.V."/>
            <person name="Pearson D."/>
            <person name="Phillimore B.J.C.T."/>
            <person name="Phillips S.H."/>
            <person name="Plumb R.W."/>
            <person name="Ramsay H."/>
            <person name="Ramsey Y."/>
            <person name="Rogers L."/>
            <person name="Ross M.T."/>
            <person name="Scott C.E."/>
            <person name="Sehra H.K."/>
            <person name="Skuce C.D."/>
            <person name="Smalley S."/>
            <person name="Smith M.L."/>
            <person name="Soderlund C."/>
            <person name="Spragon L."/>
            <person name="Steward C.A."/>
            <person name="Sulston J.E."/>
            <person name="Swann R.M."/>
            <person name="Vaudin M."/>
            <person name="Wall M."/>
            <person name="Wallis J.M."/>
            <person name="Whiteley M.N."/>
            <person name="Willey D.L."/>
            <person name="Williams L."/>
            <person name="Williams S.A."/>
            <person name="Williamson H."/>
            <person name="Wilmer T.E."/>
            <person name="Wilming L."/>
            <person name="Wright C.L."/>
            <person name="Hubbard T."/>
            <person name="Bentley D.R."/>
            <person name="Beck S."/>
            <person name="Rogers J."/>
            <person name="Shimizu N."/>
            <person name="Minoshima S."/>
            <person name="Kawasaki K."/>
            <person name="Sasaki T."/>
            <person name="Asakawa S."/>
            <person name="Kudoh J."/>
            <person name="Shintani A."/>
            <person name="Shibuya K."/>
            <person name="Yoshizaki Y."/>
            <person name="Aoki N."/>
            <person name="Mitsuyama S."/>
            <person name="Roe B.A."/>
            <person name="Chen F."/>
            <person name="Chu L."/>
            <person name="Crabtree J."/>
            <person name="Deschamps S."/>
            <person name="Do A."/>
            <person name="Do T."/>
            <person name="Dorman A."/>
            <person name="Fang F."/>
            <person name="Fu Y."/>
            <person name="Hu P."/>
            <person name="Hua A."/>
            <person name="Kenton S."/>
            <person name="Lai H."/>
            <person name="Lao H.I."/>
            <person name="Lewis J."/>
            <person name="Lewis S."/>
            <person name="Lin S.-P."/>
            <person name="Loh P."/>
            <person name="Malaj E."/>
            <person name="Nguyen T."/>
            <person name="Pan H."/>
            <person name="Phan S."/>
            <person name="Qi S."/>
            <person name="Qian Y."/>
            <person name="Ray L."/>
            <person name="Ren Q."/>
            <person name="Shaull S."/>
            <person name="Sloan D."/>
            <person name="Song L."/>
            <person name="Wang Q."/>
            <person name="Wang Y."/>
            <person name="Wang Z."/>
            <person name="White J."/>
            <person name="Willingham D."/>
            <person name="Wu H."/>
            <person name="Yao Z."/>
            <person name="Zhan M."/>
            <person name="Zhang G."/>
            <person name="Chissoe S."/>
            <person name="Murray J."/>
            <person name="Miller N."/>
            <person name="Minx P."/>
            <person name="Fulton R."/>
            <person name="Johnson D."/>
            <person name="Bemis G."/>
            <person name="Bentley D."/>
            <person name="Bradshaw H."/>
            <person name="Bourne S."/>
            <person name="Cordes M."/>
            <person name="Du Z."/>
            <person name="Fulton L."/>
            <person name="Goela D."/>
            <person name="Graves T."/>
            <person name="Hawkins J."/>
            <person name="Hinds K."/>
            <person name="Kemp K."/>
            <person name="Latreille P."/>
            <person name="Layman D."/>
            <person name="Ozersky P."/>
            <person name="Rohlfing T."/>
            <person name="Scheet P."/>
            <person name="Walker C."/>
            <person name="Wamsley A."/>
            <person name="Wohldmann P."/>
            <person name="Pepin K."/>
            <person name="Nelson J."/>
            <person name="Korf I."/>
            <person name="Bedell J.A."/>
            <person name="Hillier L.W."/>
            <person name="Mardis E."/>
            <person name="Waterston R."/>
            <person name="Wilson R."/>
            <person name="Emanuel B.S."/>
            <person name="Shaikh T."/>
            <person name="Kurahashi H."/>
            <person name="Saitta S."/>
            <person name="Budarf M.L."/>
            <person name="McDermid H.E."/>
            <person name="Johnson A."/>
            <person name="Wong A.C.C."/>
            <person name="Morrow B.E."/>
            <person name="Edelmann L."/>
            <person name="Kim U.J."/>
            <person name="Shizuya H."/>
            <person name="Simon M.I."/>
            <person name="Dumanski J.P."/>
            <person name="Peyrard M."/>
            <person name="Kedra D."/>
            <person name="Seroussi E."/>
            <person name="Fransson I."/>
            <person name="Tapia I."/>
            <person name="Bruder C.E."/>
            <person name="O'Brien K.P."/>
            <person name="Wilkinson P."/>
            <person name="Bodenteich A."/>
            <person name="Hartman K."/>
            <person name="Hu X."/>
            <person name="Khan A.S."/>
            <person name="Lane L."/>
            <person name="Tilahun Y."/>
            <person name="Wright H."/>
        </authorList>
    </citation>
    <scope>NUCLEOTIDE SEQUENCE [LARGE SCALE GENOMIC DNA]</scope>
</reference>
<reference key="4">
    <citation type="journal article" date="2004" name="Genome Res.">
        <title>The status, quality, and expansion of the NIH full-length cDNA project: the Mammalian Gene Collection (MGC).</title>
        <authorList>
            <consortium name="The MGC Project Team"/>
        </authorList>
    </citation>
    <scope>NUCLEOTIDE SEQUENCE [LARGE SCALE MRNA] (ISOFORM 2)</scope>
    <source>
        <tissue>Eye</tissue>
        <tissue>Uterus</tissue>
    </source>
</reference>
<reference key="5">
    <citation type="journal article" date="2012" name="PLoS Genet.">
        <title>RAB-like 2 has an essential role in male fertility, sperm intra-flagellar transport, and tail assembly.</title>
        <authorList>
            <person name="Lo J.C."/>
            <person name="Jamsai D."/>
            <person name="O'Connor A.E."/>
            <person name="Borg C."/>
            <person name="Clark B.J."/>
            <person name="Whisstock J.C."/>
            <person name="Field M.C."/>
            <person name="Adams V."/>
            <person name="Ishikawa T."/>
            <person name="Aitken R.J."/>
            <person name="Whittle B."/>
            <person name="Goodnow C.C."/>
            <person name="Ormandy C.J."/>
            <person name="O'Bryan M.K."/>
        </authorList>
    </citation>
    <scope>TISSUE SPECIFICITY</scope>
</reference>
<reference key="6">
    <citation type="journal article" date="2017" name="Dev. Cell">
        <title>The CEP19-RABL2 GTPase complex binds IFT-B to initiate intraflagellar transport at the ciliary base.</title>
        <authorList>
            <person name="Kanie T."/>
            <person name="Abbott K.L."/>
            <person name="Mooney N.A."/>
            <person name="Plowey E.D."/>
            <person name="Demeter J."/>
            <person name="Jackson P.K."/>
        </authorList>
    </citation>
    <scope>FUNCTION</scope>
    <scope>INTERACTION WITH CEP19 AND THE IFT74-IFT81 HETERODIMER</scope>
    <scope>SUBCELLULAR LOCATION</scope>
    <scope>MUTAGENESIS OF SER-35 AND GLN-80</scope>
    <scope>PHYLOGENETIC ANALYSIS</scope>
</reference>
<reference key="7">
    <citation type="journal article" date="2017" name="Mol. Biol. Cell">
        <title>RABL2 interacts with the intraflagellar transport-B complex and CEP19 and participates in ciliary assembly.</title>
        <authorList>
            <person name="Nishijima Y."/>
            <person name="Hagiya Y."/>
            <person name="Kubo T."/>
            <person name="Takei R."/>
            <person name="Katoh Y."/>
            <person name="Nakayama K."/>
        </authorList>
    </citation>
    <scope>FUNCTION</scope>
    <scope>INTERACTION WITH CEP19 AND THE IFT74-IFT81 HETERODIMER</scope>
    <scope>SUBCELLULAR LOCATION</scope>
    <scope>MUTAGENESIS OF SER-35; ASP-73 AND GLN-80</scope>
</reference>
<proteinExistence type="evidence at protein level"/>
<accession>Q9UNT1</accession>
<accession>Q5TZT8</accession>
<accession>Q96C33</accession>
<gene>
    <name type="primary">RABL2B</name>
</gene>